<keyword id="KW-0027">Amidation</keyword>
<keyword id="KW-0165">Cleavage on pair of basic residues</keyword>
<keyword id="KW-1015">Disulfide bond</keyword>
<keyword id="KW-0379">Hydroxylation</keyword>
<keyword id="KW-0528">Neurotoxin</keyword>
<keyword id="KW-0964">Secreted</keyword>
<keyword id="KW-0800">Toxin</keyword>
<feature type="propeptide" id="PRO_0000404896" evidence="1">
    <location>
        <begin position="1" status="less than"/>
        <end position="3"/>
    </location>
</feature>
<feature type="peptide" id="PRO_0000404897" description="Conotoxin PnMLKM-D0211">
    <location>
        <begin position="4"/>
        <end position="19"/>
    </location>
</feature>
<feature type="modified residue" description="4-hydroxyproline" evidence="1">
    <location>
        <position position="16"/>
    </location>
</feature>
<feature type="modified residue" description="Tryptophan amide" evidence="1">
    <location>
        <position position="19"/>
    </location>
</feature>
<feature type="disulfide bond" evidence="2">
    <location>
        <begin position="4"/>
        <end position="18"/>
    </location>
</feature>
<feature type="disulfide bond" evidence="2">
    <location>
        <begin position="5"/>
        <end position="14"/>
    </location>
</feature>
<feature type="disulfide bond" evidence="2">
    <location>
        <begin position="10"/>
        <end position="17"/>
    </location>
</feature>
<feature type="non-terminal residue">
    <location>
        <position position="1"/>
    </location>
</feature>
<comment type="subcellular location">
    <subcellularLocation>
        <location evidence="4">Secreted</location>
    </subcellularLocation>
</comment>
<comment type="tissue specificity">
    <text evidence="4">Expressed by the venom duct.</text>
</comment>
<comment type="domain">
    <text evidence="3">The cysteine framework is III (CC-C-C-CC). Classified in the M-2 branch, since 2 residues stand between the fourth and the fifth cysteine residues.</text>
</comment>
<comment type="similarity">
    <text evidence="3">Belongs to the conotoxin M superfamily.</text>
</comment>
<evidence type="ECO:0000250" key="1"/>
<evidence type="ECO:0000250" key="2">
    <source>
        <dbReference type="UniProtKB" id="P0CI24"/>
    </source>
</evidence>
<evidence type="ECO:0000305" key="3"/>
<evidence type="ECO:0000305" key="4">
    <source>
    </source>
</evidence>
<accession>Q9BP45</accession>
<proteinExistence type="evidence at transcript level"/>
<reference key="1">
    <citation type="journal article" date="2001" name="Mol. Biol. Evol.">
        <title>Mechanisms for evolving hypervariability: the case of conopeptides.</title>
        <authorList>
            <person name="Conticello S.G."/>
            <person name="Gilad Y."/>
            <person name="Avidan N."/>
            <person name="Ben-Asher E."/>
            <person name="Levy Z."/>
            <person name="Fainzilber M."/>
        </authorList>
    </citation>
    <scope>NUCLEOTIDE SEQUENCE [MRNA]</scope>
    <source>
        <tissue>Venom duct</tissue>
    </source>
</reference>
<name>M233_CONPE</name>
<protein>
    <recommendedName>
        <fullName>Conotoxin PnMLKM-D0211</fullName>
    </recommendedName>
</protein>
<dbReference type="EMBL" id="AF215128">
    <property type="protein sequence ID" value="AAG60533.1"/>
    <property type="molecule type" value="mRNA"/>
</dbReference>
<dbReference type="ConoServer" id="789">
    <property type="toxin name" value="Pn3.3 precursor"/>
</dbReference>
<dbReference type="GO" id="GO:0005576">
    <property type="term" value="C:extracellular region"/>
    <property type="evidence" value="ECO:0007669"/>
    <property type="project" value="UniProtKB-SubCell"/>
</dbReference>
<dbReference type="GO" id="GO:0090729">
    <property type="term" value="F:toxin activity"/>
    <property type="evidence" value="ECO:0007669"/>
    <property type="project" value="UniProtKB-KW"/>
</dbReference>
<sequence>VKRCCDEEECSSACWPCCWG</sequence>
<organism>
    <name type="scientific">Conus pennaceus</name>
    <name type="common">Feathered cone</name>
    <name type="synonym">Conus episcopus</name>
    <dbReference type="NCBI Taxonomy" id="37335"/>
    <lineage>
        <taxon>Eukaryota</taxon>
        <taxon>Metazoa</taxon>
        <taxon>Spiralia</taxon>
        <taxon>Lophotrochozoa</taxon>
        <taxon>Mollusca</taxon>
        <taxon>Gastropoda</taxon>
        <taxon>Caenogastropoda</taxon>
        <taxon>Neogastropoda</taxon>
        <taxon>Conoidea</taxon>
        <taxon>Conidae</taxon>
        <taxon>Conus</taxon>
        <taxon>Darioconus</taxon>
    </lineage>
</organism>